<organism>
    <name type="scientific">Shewanella woodyi (strain ATCC 51908 / MS32)</name>
    <dbReference type="NCBI Taxonomy" id="392500"/>
    <lineage>
        <taxon>Bacteria</taxon>
        <taxon>Pseudomonadati</taxon>
        <taxon>Pseudomonadota</taxon>
        <taxon>Gammaproteobacteria</taxon>
        <taxon>Alteromonadales</taxon>
        <taxon>Shewanellaceae</taxon>
        <taxon>Shewanella</taxon>
    </lineage>
</organism>
<dbReference type="EC" id="4.2.1.96" evidence="1"/>
<dbReference type="EMBL" id="CP000961">
    <property type="protein sequence ID" value="ACA86001.1"/>
    <property type="molecule type" value="Genomic_DNA"/>
</dbReference>
<dbReference type="RefSeq" id="WP_012324347.1">
    <property type="nucleotide sequence ID" value="NC_010506.1"/>
</dbReference>
<dbReference type="SMR" id="B1KMK3"/>
<dbReference type="STRING" id="392500.Swoo_1716"/>
<dbReference type="KEGG" id="swd:Swoo_1716"/>
<dbReference type="eggNOG" id="COG2154">
    <property type="taxonomic scope" value="Bacteria"/>
</dbReference>
<dbReference type="HOGENOM" id="CLU_081974_2_2_6"/>
<dbReference type="Proteomes" id="UP000002168">
    <property type="component" value="Chromosome"/>
</dbReference>
<dbReference type="GO" id="GO:0008124">
    <property type="term" value="F:4-alpha-hydroxytetrahydrobiopterin dehydratase activity"/>
    <property type="evidence" value="ECO:0007669"/>
    <property type="project" value="UniProtKB-UniRule"/>
</dbReference>
<dbReference type="GO" id="GO:0006729">
    <property type="term" value="P:tetrahydrobiopterin biosynthetic process"/>
    <property type="evidence" value="ECO:0007669"/>
    <property type="project" value="InterPro"/>
</dbReference>
<dbReference type="CDD" id="cd00913">
    <property type="entry name" value="PCD_DCoH_subfamily_a"/>
    <property type="match status" value="1"/>
</dbReference>
<dbReference type="Gene3D" id="3.30.1360.20">
    <property type="entry name" value="Transcriptional coactivator/pterin dehydratase"/>
    <property type="match status" value="1"/>
</dbReference>
<dbReference type="HAMAP" id="MF_00434">
    <property type="entry name" value="Pterin_4_alpha"/>
    <property type="match status" value="1"/>
</dbReference>
<dbReference type="InterPro" id="IPR036428">
    <property type="entry name" value="PCD_sf"/>
</dbReference>
<dbReference type="InterPro" id="IPR050376">
    <property type="entry name" value="Pterin-4-alpha-carb_dehyd"/>
</dbReference>
<dbReference type="InterPro" id="IPR001533">
    <property type="entry name" value="Pterin_deHydtase"/>
</dbReference>
<dbReference type="NCBIfam" id="NF002016">
    <property type="entry name" value="PRK00823.1-1"/>
    <property type="match status" value="1"/>
</dbReference>
<dbReference type="PANTHER" id="PTHR42805">
    <property type="entry name" value="PTERIN-4-ALPHA-CARBINOLAMINE DEHYDRATASE-RELATED"/>
    <property type="match status" value="1"/>
</dbReference>
<dbReference type="PANTHER" id="PTHR42805:SF1">
    <property type="entry name" value="PTERIN-4-ALPHA-CARBINOLAMINE DEHYDRATASE-RELATED"/>
    <property type="match status" value="1"/>
</dbReference>
<dbReference type="Pfam" id="PF01329">
    <property type="entry name" value="Pterin_4a"/>
    <property type="match status" value="1"/>
</dbReference>
<dbReference type="SUPFAM" id="SSF55248">
    <property type="entry name" value="PCD-like"/>
    <property type="match status" value="1"/>
</dbReference>
<evidence type="ECO:0000255" key="1">
    <source>
        <dbReference type="HAMAP-Rule" id="MF_00434"/>
    </source>
</evidence>
<proteinExistence type="inferred from homology"/>
<comment type="catalytic activity">
    <reaction evidence="1">
        <text>(4aS,6R)-4a-hydroxy-L-erythro-5,6,7,8-tetrahydrobiopterin = (6R)-L-erythro-6,7-dihydrobiopterin + H2O</text>
        <dbReference type="Rhea" id="RHEA:11920"/>
        <dbReference type="ChEBI" id="CHEBI:15377"/>
        <dbReference type="ChEBI" id="CHEBI:15642"/>
        <dbReference type="ChEBI" id="CHEBI:43120"/>
        <dbReference type="EC" id="4.2.1.96"/>
    </reaction>
</comment>
<comment type="similarity">
    <text evidence="1">Belongs to the pterin-4-alpha-carbinolamine dehydratase family.</text>
</comment>
<name>PHS_SHEWM</name>
<accession>B1KMK3</accession>
<gene>
    <name type="ordered locus">Swoo_1716</name>
</gene>
<feature type="chain" id="PRO_1000192937" description="Putative pterin-4-alpha-carbinolamine dehydratase">
    <location>
        <begin position="1"/>
        <end position="112"/>
    </location>
</feature>
<keyword id="KW-0456">Lyase</keyword>
<keyword id="KW-1185">Reference proteome</keyword>
<protein>
    <recommendedName>
        <fullName evidence="1">Putative pterin-4-alpha-carbinolamine dehydratase</fullName>
        <shortName evidence="1">PHS</shortName>
        <ecNumber evidence="1">4.2.1.96</ecNumber>
    </recommendedName>
    <alternativeName>
        <fullName evidence="1">4-alpha-hydroxy-tetrahydropterin dehydratase</fullName>
    </alternativeName>
    <alternativeName>
        <fullName evidence="1">Pterin carbinolamine dehydratase</fullName>
        <shortName evidence="1">PCD</shortName>
    </alternativeName>
</protein>
<sequence length="112" mass="12879">MTKLADMKCEACQADAPKVTDSELAELIRLIPDWGVEVRDGIMQLERVYKFKNFKLAMEFTNKLAELAEEEFHHPGILTEWGKVTVTWWSHSVKGLHRNDFIMASKTDQLLG</sequence>
<reference key="1">
    <citation type="submission" date="2008-02" db="EMBL/GenBank/DDBJ databases">
        <title>Complete sequence of Shewanella woodyi ATCC 51908.</title>
        <authorList>
            <consortium name="US DOE Joint Genome Institute"/>
            <person name="Copeland A."/>
            <person name="Lucas S."/>
            <person name="Lapidus A."/>
            <person name="Glavina del Rio T."/>
            <person name="Dalin E."/>
            <person name="Tice H."/>
            <person name="Bruce D."/>
            <person name="Goodwin L."/>
            <person name="Pitluck S."/>
            <person name="Sims D."/>
            <person name="Brettin T."/>
            <person name="Detter J.C."/>
            <person name="Han C."/>
            <person name="Kuske C.R."/>
            <person name="Schmutz J."/>
            <person name="Larimer F."/>
            <person name="Land M."/>
            <person name="Hauser L."/>
            <person name="Kyrpides N."/>
            <person name="Lykidis A."/>
            <person name="Zhao J.-S."/>
            <person name="Richardson P."/>
        </authorList>
    </citation>
    <scope>NUCLEOTIDE SEQUENCE [LARGE SCALE GENOMIC DNA]</scope>
    <source>
        <strain>ATCC 51908 / MS32</strain>
    </source>
</reference>